<sequence length="237" mass="26851">MTPQAFYQVLIEHGITLTDKQKKQFETYFRLLVEWNEKINLTAITDKEEVYLKHFYDSIAPILQGYIDNSPLSILDIGAGAGFPSIPMKILYPEIDITIIDSLNKRINFLNILANELELSGVHFFHGRAEDFGQDRVFRAKFDIVTARAVARMQVLAELTIPFLKVNGRLIALKAAAAEEELISAEKALKTLFSQVTVNKNYKLPNGDDRNITIVSKKKETPNKYPRKAGTPNKKPL</sequence>
<dbReference type="EC" id="2.1.1.-" evidence="1"/>
<dbReference type="EMBL" id="CP000114">
    <property type="protein sequence ID" value="ABA44812.1"/>
    <property type="molecule type" value="Genomic_DNA"/>
</dbReference>
<dbReference type="RefSeq" id="WP_000188795.1">
    <property type="nucleotide sequence ID" value="NC_007432.1"/>
</dbReference>
<dbReference type="SMR" id="Q3JZQ7"/>
<dbReference type="KEGG" id="sak:SAK_1643"/>
<dbReference type="HOGENOM" id="CLU_065341_0_2_9"/>
<dbReference type="GO" id="GO:0005829">
    <property type="term" value="C:cytosol"/>
    <property type="evidence" value="ECO:0007669"/>
    <property type="project" value="TreeGrafter"/>
</dbReference>
<dbReference type="GO" id="GO:0070043">
    <property type="term" value="F:rRNA (guanine-N7-)-methyltransferase activity"/>
    <property type="evidence" value="ECO:0007669"/>
    <property type="project" value="UniProtKB-UniRule"/>
</dbReference>
<dbReference type="CDD" id="cd02440">
    <property type="entry name" value="AdoMet_MTases"/>
    <property type="match status" value="1"/>
</dbReference>
<dbReference type="FunFam" id="3.40.50.150:FF:000041">
    <property type="entry name" value="Ribosomal RNA small subunit methyltransferase G"/>
    <property type="match status" value="1"/>
</dbReference>
<dbReference type="Gene3D" id="3.40.50.150">
    <property type="entry name" value="Vaccinia Virus protein VP39"/>
    <property type="match status" value="1"/>
</dbReference>
<dbReference type="HAMAP" id="MF_00074">
    <property type="entry name" value="16SrRNA_methyltr_G"/>
    <property type="match status" value="1"/>
</dbReference>
<dbReference type="InterPro" id="IPR003682">
    <property type="entry name" value="rRNA_ssu_MeTfrase_G"/>
</dbReference>
<dbReference type="InterPro" id="IPR029063">
    <property type="entry name" value="SAM-dependent_MTases_sf"/>
</dbReference>
<dbReference type="NCBIfam" id="TIGR00138">
    <property type="entry name" value="rsmG_gidB"/>
    <property type="match status" value="1"/>
</dbReference>
<dbReference type="PANTHER" id="PTHR31760">
    <property type="entry name" value="S-ADENOSYL-L-METHIONINE-DEPENDENT METHYLTRANSFERASES SUPERFAMILY PROTEIN"/>
    <property type="match status" value="1"/>
</dbReference>
<dbReference type="PANTHER" id="PTHR31760:SF0">
    <property type="entry name" value="S-ADENOSYL-L-METHIONINE-DEPENDENT METHYLTRANSFERASES SUPERFAMILY PROTEIN"/>
    <property type="match status" value="1"/>
</dbReference>
<dbReference type="Pfam" id="PF02527">
    <property type="entry name" value="GidB"/>
    <property type="match status" value="1"/>
</dbReference>
<dbReference type="PIRSF" id="PIRSF003078">
    <property type="entry name" value="GidB"/>
    <property type="match status" value="1"/>
</dbReference>
<dbReference type="SUPFAM" id="SSF53335">
    <property type="entry name" value="S-adenosyl-L-methionine-dependent methyltransferases"/>
    <property type="match status" value="1"/>
</dbReference>
<organism>
    <name type="scientific">Streptococcus agalactiae serotype Ia (strain ATCC 27591 / A909 / CDC SS700)</name>
    <dbReference type="NCBI Taxonomy" id="205921"/>
    <lineage>
        <taxon>Bacteria</taxon>
        <taxon>Bacillati</taxon>
        <taxon>Bacillota</taxon>
        <taxon>Bacilli</taxon>
        <taxon>Lactobacillales</taxon>
        <taxon>Streptococcaceae</taxon>
        <taxon>Streptococcus</taxon>
    </lineage>
</organism>
<comment type="function">
    <text evidence="1">Specifically methylates the N7 position of a guanine in 16S rRNA.</text>
</comment>
<comment type="subcellular location">
    <subcellularLocation>
        <location evidence="1">Cytoplasm</location>
    </subcellularLocation>
</comment>
<comment type="similarity">
    <text evidence="1">Belongs to the methyltransferase superfamily. RNA methyltransferase RsmG family.</text>
</comment>
<name>RSMG_STRA1</name>
<gene>
    <name evidence="1" type="primary">rsmG</name>
    <name type="ordered locus">SAK_1643</name>
</gene>
<keyword id="KW-0963">Cytoplasm</keyword>
<keyword id="KW-0489">Methyltransferase</keyword>
<keyword id="KW-0698">rRNA processing</keyword>
<keyword id="KW-0949">S-adenosyl-L-methionine</keyword>
<keyword id="KW-0808">Transferase</keyword>
<accession>Q3JZQ7</accession>
<proteinExistence type="inferred from homology"/>
<protein>
    <recommendedName>
        <fullName evidence="1">Ribosomal RNA small subunit methyltransferase G</fullName>
        <ecNumber evidence="1">2.1.1.-</ecNumber>
    </recommendedName>
    <alternativeName>
        <fullName evidence="1">16S rRNA 7-methylguanosine methyltransferase</fullName>
        <shortName evidence="1">16S rRNA m7G methyltransferase</shortName>
    </alternativeName>
</protein>
<feature type="chain" id="PRO_1000010218" description="Ribosomal RNA small subunit methyltransferase G">
    <location>
        <begin position="1"/>
        <end position="237"/>
    </location>
</feature>
<feature type="region of interest" description="Disordered" evidence="2">
    <location>
        <begin position="216"/>
        <end position="237"/>
    </location>
</feature>
<feature type="binding site" evidence="1">
    <location>
        <position position="78"/>
    </location>
    <ligand>
        <name>S-adenosyl-L-methionine</name>
        <dbReference type="ChEBI" id="CHEBI:59789"/>
    </ligand>
</feature>
<feature type="binding site" evidence="1">
    <location>
        <position position="83"/>
    </location>
    <ligand>
        <name>S-adenosyl-L-methionine</name>
        <dbReference type="ChEBI" id="CHEBI:59789"/>
    </ligand>
</feature>
<feature type="binding site" evidence="1">
    <location>
        <begin position="129"/>
        <end position="130"/>
    </location>
    <ligand>
        <name>S-adenosyl-L-methionine</name>
        <dbReference type="ChEBI" id="CHEBI:59789"/>
    </ligand>
</feature>
<feature type="binding site" evidence="1">
    <location>
        <position position="148"/>
    </location>
    <ligand>
        <name>S-adenosyl-L-methionine</name>
        <dbReference type="ChEBI" id="CHEBI:59789"/>
    </ligand>
</feature>
<reference key="1">
    <citation type="journal article" date="2005" name="Proc. Natl. Acad. Sci. U.S.A.">
        <title>Genome analysis of multiple pathogenic isolates of Streptococcus agalactiae: implications for the microbial 'pan-genome'.</title>
        <authorList>
            <person name="Tettelin H."/>
            <person name="Masignani V."/>
            <person name="Cieslewicz M.J."/>
            <person name="Donati C."/>
            <person name="Medini D."/>
            <person name="Ward N.L."/>
            <person name="Angiuoli S.V."/>
            <person name="Crabtree J."/>
            <person name="Jones A.L."/>
            <person name="Durkin A.S."/>
            <person name="DeBoy R.T."/>
            <person name="Davidsen T.M."/>
            <person name="Mora M."/>
            <person name="Scarselli M."/>
            <person name="Margarit y Ros I."/>
            <person name="Peterson J.D."/>
            <person name="Hauser C.R."/>
            <person name="Sundaram J.P."/>
            <person name="Nelson W.C."/>
            <person name="Madupu R."/>
            <person name="Brinkac L.M."/>
            <person name="Dodson R.J."/>
            <person name="Rosovitz M.J."/>
            <person name="Sullivan S.A."/>
            <person name="Daugherty S.C."/>
            <person name="Haft D.H."/>
            <person name="Selengut J."/>
            <person name="Gwinn M.L."/>
            <person name="Zhou L."/>
            <person name="Zafar N."/>
            <person name="Khouri H."/>
            <person name="Radune D."/>
            <person name="Dimitrov G."/>
            <person name="Watkins K."/>
            <person name="O'Connor K.J."/>
            <person name="Smith S."/>
            <person name="Utterback T.R."/>
            <person name="White O."/>
            <person name="Rubens C.E."/>
            <person name="Grandi G."/>
            <person name="Madoff L.C."/>
            <person name="Kasper D.L."/>
            <person name="Telford J.L."/>
            <person name="Wessels M.R."/>
            <person name="Rappuoli R."/>
            <person name="Fraser C.M."/>
        </authorList>
    </citation>
    <scope>NUCLEOTIDE SEQUENCE [LARGE SCALE GENOMIC DNA]</scope>
    <source>
        <strain>ATCC 27591 / A909 / CDC SS700</strain>
    </source>
</reference>
<evidence type="ECO:0000255" key="1">
    <source>
        <dbReference type="HAMAP-Rule" id="MF_00074"/>
    </source>
</evidence>
<evidence type="ECO:0000256" key="2">
    <source>
        <dbReference type="SAM" id="MobiDB-lite"/>
    </source>
</evidence>